<keyword id="KW-0025">Alternative splicing</keyword>
<keyword id="KW-0150">Chloroplast</keyword>
<keyword id="KW-0472">Membrane</keyword>
<keyword id="KW-0934">Plastid</keyword>
<keyword id="KW-1185">Reference proteome</keyword>
<keyword id="KW-0808">Transferase</keyword>
<keyword id="KW-0809">Transit peptide</keyword>
<keyword id="KW-0812">Transmembrane</keyword>
<keyword id="KW-1133">Transmembrane helix</keyword>
<reference key="1">
    <citation type="journal article" date="2006" name="Planta">
        <title>Identification and characterization of an Arabidopsis homogentisate phytyltransferase paralog.</title>
        <authorList>
            <person name="Venkatesh T.V."/>
            <person name="Karunanandaa B."/>
            <person name="Free D.L."/>
            <person name="Rottnek J.M."/>
            <person name="Baszis S.R."/>
            <person name="Valentin H.E."/>
        </authorList>
    </citation>
    <scope>NUCLEOTIDE SEQUENCE [MRNA]</scope>
    <scope>FUNCTION</scope>
    <scope>NOMENCLATURE</scope>
    <source>
        <strain>cv. Columbia</strain>
    </source>
</reference>
<reference key="2">
    <citation type="journal article" date="2007" name="Planta">
        <title>The pds2 mutation is a lesion in the Arabidopsis homogentisate solanesyltransferase gene involved in plastoquinone biosynthesis.</title>
        <authorList>
            <person name="Tian L."/>
            <person name="DellaPenna D."/>
            <person name="Dixon R.A."/>
        </authorList>
    </citation>
    <scope>NUCLEOTIDE SEQUENCE [GENOMIC DNA]</scope>
    <scope>MUTAGENESIS OF 148-VAL-GLY-149</scope>
    <scope>SUBCELLULAR LOCATION</scope>
    <source>
        <strain>cv. Columbia</strain>
    </source>
</reference>
<reference key="3">
    <citation type="journal article" date="2000" name="DNA Res.">
        <title>Structural analysis of Arabidopsis thaliana chromosome 3. II. Sequence features of the 4,251,695 bp regions covered by 90 P1, TAC and BAC clones.</title>
        <authorList>
            <person name="Kaneko T."/>
            <person name="Katoh T."/>
            <person name="Sato S."/>
            <person name="Nakamura Y."/>
            <person name="Asamizu E."/>
            <person name="Tabata S."/>
        </authorList>
    </citation>
    <scope>NUCLEOTIDE SEQUENCE [LARGE SCALE GENOMIC DNA]</scope>
    <source>
        <strain>cv. Columbia</strain>
    </source>
</reference>
<reference key="4">
    <citation type="journal article" date="2017" name="Plant J.">
        <title>Araport11: a complete reannotation of the Arabidopsis thaliana reference genome.</title>
        <authorList>
            <person name="Cheng C.Y."/>
            <person name="Krishnakumar V."/>
            <person name="Chan A.P."/>
            <person name="Thibaud-Nissen F."/>
            <person name="Schobel S."/>
            <person name="Town C.D."/>
        </authorList>
    </citation>
    <scope>GENOME REANNOTATION</scope>
    <source>
        <strain>cv. Columbia</strain>
    </source>
</reference>
<reference key="5">
    <citation type="journal article" date="2006" name="FEBS Lett.">
        <title>Characterization of homogentisate prenyltransferases involved in plastoquinone-9 and tocochromanol biosynthesis.</title>
        <authorList>
            <person name="Sadre R."/>
            <person name="Gruber J."/>
            <person name="Frentzen M."/>
        </authorList>
    </citation>
    <scope>FUNCTION</scope>
    <scope>CATALYTIC ACTIVITY</scope>
</reference>
<reference key="6">
    <citation type="journal article" date="2010" name="J. Biol. Chem.">
        <title>Catalytic reactions of the homogentisate prenyl transferase involved in plastoquinone-9 biosynthesis.</title>
        <authorList>
            <person name="Sadre R."/>
            <person name="Frentzen M."/>
            <person name="Saeed M."/>
            <person name="Hawkes T."/>
        </authorList>
    </citation>
    <scope>FUNCTION</scope>
    <scope>CATALYTIC ACTIVITY</scope>
    <scope>ACTIVITY REGULATION</scope>
</reference>
<proteinExistence type="evidence at protein level"/>
<sequence length="386" mass="42841">MELSISQSPRVRFSSLAPRFLAASHHHRPSVHLAGKFISLPRDVRFTSLSTSRMRSKFVSTNYRKISIRACSQVGAAESDDPVLDRIARFQNACWRFLRPHTIRGTALGSTALVTRALIENTHLIKWSLVLKALSGLLALICGNGYIVGINQIYDIGIDKVNKPYLPIAAGDLSVQSAWLLVIFFAIAGLLVVGFNFGPFITSLYSLGLFLGTIYSVPPLRMKRFPVAAFLIIATVRGFLLNFGVYHATRAALGLPFQWSAPVAFITSFVTLFALVIAITKDLPDVEGDRKFQISTLATKLGVRNIAFLGSGLLLVNYVSAISLAFYMPQVFRGSLMIPAHVILASGLIFQTWVLEKANYTKEAISGYYRFIWNLFYAEYLLFPFL</sequence>
<gene>
    <name type="primary">HST</name>
    <name type="synonym">HPT2</name>
    <name type="synonym">VTE2-2</name>
    <name type="ordered locus">At3g11945</name>
    <name type="ORF">MEC18</name>
</gene>
<protein>
    <recommendedName>
        <fullName>Homogentisate solanesyltransferase, chloroplastic</fullName>
        <shortName>AtHST</shortName>
        <ecNumber>2.5.1.117</ecNumber>
    </recommendedName>
    <alternativeName>
        <fullName>Homogentisate phytyltransferase 2</fullName>
        <shortName>AtHPT2</shortName>
    </alternativeName>
    <alternativeName>
        <fullName>Vitamin E pathway gene 2-2 protein</fullName>
        <shortName>AtVTE2-2</shortName>
    </alternativeName>
</protein>
<comment type="function">
    <text evidence="2 3 5">Involved in the synthesis of plastoquinone-9. Can use both homogentisic acid and 2,5-dihydroxyphenylacetic acid gamma-lactone as prenyl acceptors, and solanesyl diphosphate &gt; farnesyl diphosphate &gt; geranylgeranyl diphosphate &gt;&gt; phytyl diphosphate as prenyl donors. Do not catalyze the decardoxylation of homogentisate uncoupled from prenylation.</text>
</comment>
<comment type="catalytic activity">
    <reaction evidence="3 5">
        <text>all-trans-nonaprenyl diphosphate + homogentisate + H(+) = 2-methyl-6-(all-trans-nonaprenyl)benzene-1,4-diol + CO2 + diphosphate</text>
        <dbReference type="Rhea" id="RHEA:37995"/>
        <dbReference type="ChEBI" id="CHEBI:15378"/>
        <dbReference type="ChEBI" id="CHEBI:16169"/>
        <dbReference type="ChEBI" id="CHEBI:16526"/>
        <dbReference type="ChEBI" id="CHEBI:33019"/>
        <dbReference type="ChEBI" id="CHEBI:58391"/>
        <dbReference type="ChEBI" id="CHEBI:75402"/>
        <dbReference type="EC" id="2.5.1.117"/>
    </reaction>
</comment>
<comment type="activity regulation">
    <text evidence="5">Inhibited by haloxydine (3,5-dichloro-2,6-difluoro-4-haloxypyridine).</text>
</comment>
<comment type="subcellular location">
    <subcellularLocation>
        <location evidence="4">Plastid</location>
        <location evidence="4">Chloroplast membrane</location>
        <topology evidence="4">Multi-pass membrane protein</topology>
    </subcellularLocation>
</comment>
<comment type="alternative products">
    <event type="alternative splicing"/>
    <isoform>
        <id>Q1ACB3-1</id>
        <name>1</name>
        <sequence type="displayed"/>
    </isoform>
    <text>A number of isoforms are produced. According to EST sequences.</text>
</comment>
<comment type="miscellaneous">
    <text evidence="7">Seeds overexpressing HST accumulate increased levels of tocopherol.</text>
</comment>
<comment type="similarity">
    <text evidence="6">Belongs to the UbiA prenyltransferase family.</text>
</comment>
<comment type="caution">
    <text evidence="7">Was initially thought to have a homogentisate phytyltransferase activity and to be involved in tocopherol biosynthesis.</text>
</comment>
<comment type="sequence caution" evidence="6">
    <conflict type="erroneous gene model prediction">
        <sequence resource="EMBL-CDS" id="BAB03104"/>
    </conflict>
</comment>
<feature type="transit peptide" description="Chloroplast" evidence="1">
    <location>
        <begin position="1"/>
        <end position="69"/>
    </location>
</feature>
<feature type="chain" id="PRO_0000409869" description="Homogentisate solanesyltransferase, chloroplastic">
    <location>
        <begin position="70"/>
        <end position="386"/>
    </location>
</feature>
<feature type="transmembrane region" description="Helical" evidence="1">
    <location>
        <begin position="130"/>
        <end position="150"/>
    </location>
</feature>
<feature type="transmembrane region" description="Helical" evidence="1">
    <location>
        <begin position="181"/>
        <end position="201"/>
    </location>
</feature>
<feature type="transmembrane region" description="Helical" evidence="1">
    <location>
        <begin position="204"/>
        <end position="220"/>
    </location>
</feature>
<feature type="transmembrane region" description="Helical" evidence="1">
    <location>
        <begin position="225"/>
        <end position="245"/>
    </location>
</feature>
<feature type="transmembrane region" description="Helical" evidence="1">
    <location>
        <begin position="259"/>
        <end position="279"/>
    </location>
</feature>
<feature type="transmembrane region" description="Helical" evidence="1">
    <location>
        <begin position="306"/>
        <end position="326"/>
    </location>
</feature>
<feature type="transmembrane region" description="Helical" evidence="1">
    <location>
        <begin position="335"/>
        <end position="355"/>
    </location>
</feature>
<feature type="transmembrane region" description="Helical" evidence="1">
    <location>
        <begin position="365"/>
        <end position="385"/>
    </location>
</feature>
<feature type="mutagenesis site" description="In pds2; albino phenotype." evidence="4">
    <location>
        <begin position="148"/>
        <end position="149"/>
    </location>
</feature>
<dbReference type="EC" id="2.5.1.117"/>
<dbReference type="EMBL" id="DQ231060">
    <property type="protein sequence ID" value="ABB70127.1"/>
    <property type="molecule type" value="mRNA"/>
</dbReference>
<dbReference type="EMBL" id="AP002040">
    <property type="protein sequence ID" value="BAB03104.1"/>
    <property type="status" value="ALT_SEQ"/>
    <property type="molecule type" value="Genomic_DNA"/>
</dbReference>
<dbReference type="EMBL" id="CP002686">
    <property type="protein sequence ID" value="AEE75125.1"/>
    <property type="molecule type" value="Genomic_DNA"/>
</dbReference>
<dbReference type="RefSeq" id="NP_001078138.1">
    <molecule id="Q1ACB3-1"/>
    <property type="nucleotide sequence ID" value="NM_001084669.2"/>
</dbReference>
<dbReference type="SMR" id="Q1ACB3"/>
<dbReference type="FunCoup" id="Q1ACB3">
    <property type="interactions" value="1266"/>
</dbReference>
<dbReference type="STRING" id="3702.Q1ACB3"/>
<dbReference type="SwissPalm" id="Q1ACB3"/>
<dbReference type="PaxDb" id="3702-AT3G11945.2"/>
<dbReference type="ProteomicsDB" id="230218">
    <molecule id="Q1ACB3-1"/>
</dbReference>
<dbReference type="EnsemblPlants" id="AT3G11945.1">
    <molecule id="Q1ACB3-1"/>
    <property type="protein sequence ID" value="AT3G11945.1"/>
    <property type="gene ID" value="AT3G11945"/>
</dbReference>
<dbReference type="GeneID" id="5007993"/>
<dbReference type="Gramene" id="AT3G11945.1">
    <molecule id="Q1ACB3-1"/>
    <property type="protein sequence ID" value="AT3G11945.1"/>
    <property type="gene ID" value="AT3G11945"/>
</dbReference>
<dbReference type="KEGG" id="ath:AT3G11945"/>
<dbReference type="Araport" id="AT3G11945"/>
<dbReference type="TAIR" id="AT3G11945">
    <property type="gene designation" value="HST"/>
</dbReference>
<dbReference type="eggNOG" id="ENOG502QUHT">
    <property type="taxonomic scope" value="Eukaryota"/>
</dbReference>
<dbReference type="HOGENOM" id="CLU_048963_2_0_1"/>
<dbReference type="InParanoid" id="Q1ACB3"/>
<dbReference type="OMA" id="LIFQAWV"/>
<dbReference type="OrthoDB" id="1502398at2759"/>
<dbReference type="PhylomeDB" id="Q1ACB3"/>
<dbReference type="BRENDA" id="2.5.1.115">
    <property type="organism ID" value="399"/>
</dbReference>
<dbReference type="BRENDA" id="2.5.1.117">
    <property type="organism ID" value="399"/>
</dbReference>
<dbReference type="PRO" id="PR:Q1ACB3"/>
<dbReference type="Proteomes" id="UP000006548">
    <property type="component" value="Chromosome 3"/>
</dbReference>
<dbReference type="ExpressionAtlas" id="Q1ACB3">
    <property type="expression patterns" value="baseline and differential"/>
</dbReference>
<dbReference type="GO" id="GO:0031969">
    <property type="term" value="C:chloroplast membrane"/>
    <property type="evidence" value="ECO:0007669"/>
    <property type="project" value="UniProtKB-SubCell"/>
</dbReference>
<dbReference type="GO" id="GO:0010357">
    <property type="term" value="F:homogentisate solanesyltransferase activity"/>
    <property type="evidence" value="ECO:0007669"/>
    <property type="project" value="UniProtKB-EC"/>
</dbReference>
<dbReference type="CDD" id="cd13960">
    <property type="entry name" value="PT_UbiA_HPT1"/>
    <property type="match status" value="1"/>
</dbReference>
<dbReference type="FunFam" id="1.10.357.140:FF:000009">
    <property type="entry name" value="homogentisate solanesyltransferase, chloroplastic"/>
    <property type="match status" value="1"/>
</dbReference>
<dbReference type="Gene3D" id="1.10.357.140">
    <property type="entry name" value="UbiA prenyltransferase"/>
    <property type="match status" value="1"/>
</dbReference>
<dbReference type="InterPro" id="IPR044502">
    <property type="entry name" value="AtHST-like"/>
</dbReference>
<dbReference type="InterPro" id="IPR000537">
    <property type="entry name" value="UbiA_prenyltransferase"/>
</dbReference>
<dbReference type="InterPro" id="IPR044878">
    <property type="entry name" value="UbiA_sf"/>
</dbReference>
<dbReference type="NCBIfam" id="NF009525">
    <property type="entry name" value="PRK12887.1"/>
    <property type="match status" value="1"/>
</dbReference>
<dbReference type="PANTHER" id="PTHR43009">
    <property type="entry name" value="HOMOGENTISATE SOLANESYLTRANSFERASE, CHLOROPLASTIC"/>
    <property type="match status" value="1"/>
</dbReference>
<dbReference type="PANTHER" id="PTHR43009:SF10">
    <property type="entry name" value="HOMOGENTISATE SOLANESYLTRANSFERASE, CHLOROPLASTIC"/>
    <property type="match status" value="1"/>
</dbReference>
<dbReference type="Pfam" id="PF01040">
    <property type="entry name" value="UbiA"/>
    <property type="match status" value="1"/>
</dbReference>
<organism>
    <name type="scientific">Arabidopsis thaliana</name>
    <name type="common">Mouse-ear cress</name>
    <dbReference type="NCBI Taxonomy" id="3702"/>
    <lineage>
        <taxon>Eukaryota</taxon>
        <taxon>Viridiplantae</taxon>
        <taxon>Streptophyta</taxon>
        <taxon>Embryophyta</taxon>
        <taxon>Tracheophyta</taxon>
        <taxon>Spermatophyta</taxon>
        <taxon>Magnoliopsida</taxon>
        <taxon>eudicotyledons</taxon>
        <taxon>Gunneridae</taxon>
        <taxon>Pentapetalae</taxon>
        <taxon>rosids</taxon>
        <taxon>malvids</taxon>
        <taxon>Brassicales</taxon>
        <taxon>Brassicaceae</taxon>
        <taxon>Camelineae</taxon>
        <taxon>Arabidopsis</taxon>
    </lineage>
</organism>
<name>HSTC_ARATH</name>
<accession>Q1ACB3</accession>
<accession>Q9LHM7</accession>
<evidence type="ECO:0000255" key="1"/>
<evidence type="ECO:0000269" key="2">
    <source>
    </source>
</evidence>
<evidence type="ECO:0000269" key="3">
    <source>
    </source>
</evidence>
<evidence type="ECO:0000269" key="4">
    <source>
    </source>
</evidence>
<evidence type="ECO:0000269" key="5">
    <source>
    </source>
</evidence>
<evidence type="ECO:0000305" key="6"/>
<evidence type="ECO:0000305" key="7">
    <source>
    </source>
</evidence>